<gene>
    <name evidence="1" type="primary">rplE</name>
    <name type="ordered locus">spr0201</name>
</gene>
<evidence type="ECO:0000255" key="1">
    <source>
        <dbReference type="HAMAP-Rule" id="MF_01333"/>
    </source>
</evidence>
<evidence type="ECO:0000305" key="2"/>
<feature type="chain" id="PRO_0000125002" description="Large ribosomal subunit protein uL5">
    <location>
        <begin position="1"/>
        <end position="180"/>
    </location>
</feature>
<organism>
    <name type="scientific">Streptococcus pneumoniae (strain ATCC BAA-255 / R6)</name>
    <dbReference type="NCBI Taxonomy" id="171101"/>
    <lineage>
        <taxon>Bacteria</taxon>
        <taxon>Bacillati</taxon>
        <taxon>Bacillota</taxon>
        <taxon>Bacilli</taxon>
        <taxon>Lactobacillales</taxon>
        <taxon>Streptococcaceae</taxon>
        <taxon>Streptococcus</taxon>
    </lineage>
</organism>
<name>RL5_STRR6</name>
<proteinExistence type="inferred from homology"/>
<keyword id="KW-1185">Reference proteome</keyword>
<keyword id="KW-0687">Ribonucleoprotein</keyword>
<keyword id="KW-0689">Ribosomal protein</keyword>
<keyword id="KW-0694">RNA-binding</keyword>
<keyword id="KW-0699">rRNA-binding</keyword>
<keyword id="KW-0820">tRNA-binding</keyword>
<reference key="1">
    <citation type="journal article" date="2001" name="J. Bacteriol.">
        <title>Genome of the bacterium Streptococcus pneumoniae strain R6.</title>
        <authorList>
            <person name="Hoskins J."/>
            <person name="Alborn W.E. Jr."/>
            <person name="Arnold J."/>
            <person name="Blaszczak L.C."/>
            <person name="Burgett S."/>
            <person name="DeHoff B.S."/>
            <person name="Estrem S.T."/>
            <person name="Fritz L."/>
            <person name="Fu D.-J."/>
            <person name="Fuller W."/>
            <person name="Geringer C."/>
            <person name="Gilmour R."/>
            <person name="Glass J.S."/>
            <person name="Khoja H."/>
            <person name="Kraft A.R."/>
            <person name="Lagace R.E."/>
            <person name="LeBlanc D.J."/>
            <person name="Lee L.N."/>
            <person name="Lefkowitz E.J."/>
            <person name="Lu J."/>
            <person name="Matsushima P."/>
            <person name="McAhren S.M."/>
            <person name="McHenney M."/>
            <person name="McLeaster K."/>
            <person name="Mundy C.W."/>
            <person name="Nicas T.I."/>
            <person name="Norris F.H."/>
            <person name="O'Gara M."/>
            <person name="Peery R.B."/>
            <person name="Robertson G.T."/>
            <person name="Rockey P."/>
            <person name="Sun P.-M."/>
            <person name="Winkler M.E."/>
            <person name="Yang Y."/>
            <person name="Young-Bellido M."/>
            <person name="Zhao G."/>
            <person name="Zook C.A."/>
            <person name="Baltz R.H."/>
            <person name="Jaskunas S.R."/>
            <person name="Rosteck P.R. Jr."/>
            <person name="Skatrud P.L."/>
            <person name="Glass J.I."/>
        </authorList>
    </citation>
    <scope>NUCLEOTIDE SEQUENCE [LARGE SCALE GENOMIC DNA]</scope>
    <source>
        <strain>ATCC BAA-255 / R6</strain>
    </source>
</reference>
<protein>
    <recommendedName>
        <fullName evidence="1">Large ribosomal subunit protein uL5</fullName>
    </recommendedName>
    <alternativeName>
        <fullName evidence="2">50S ribosomal protein L5</fullName>
    </alternativeName>
</protein>
<dbReference type="EMBL" id="AE007317">
    <property type="protein sequence ID" value="AAK99005.1"/>
    <property type="molecule type" value="Genomic_DNA"/>
</dbReference>
<dbReference type="PIR" id="A97897">
    <property type="entry name" value="A97897"/>
</dbReference>
<dbReference type="PIR" id="H95025">
    <property type="entry name" value="H95025"/>
</dbReference>
<dbReference type="RefSeq" id="NP_357795.1">
    <property type="nucleotide sequence ID" value="NC_003098.1"/>
</dbReference>
<dbReference type="RefSeq" id="WP_000013542.1">
    <property type="nucleotide sequence ID" value="NC_003098.1"/>
</dbReference>
<dbReference type="SMR" id="Q8CWV4"/>
<dbReference type="STRING" id="171101.spr0201"/>
<dbReference type="GeneID" id="93738969"/>
<dbReference type="KEGG" id="spr:spr0201"/>
<dbReference type="PATRIC" id="fig|171101.6.peg.232"/>
<dbReference type="eggNOG" id="COG0094">
    <property type="taxonomic scope" value="Bacteria"/>
</dbReference>
<dbReference type="HOGENOM" id="CLU_061015_2_1_9"/>
<dbReference type="PRO" id="PR:Q8CWV4"/>
<dbReference type="Proteomes" id="UP000000586">
    <property type="component" value="Chromosome"/>
</dbReference>
<dbReference type="GO" id="GO:0022625">
    <property type="term" value="C:cytosolic large ribosomal subunit"/>
    <property type="evidence" value="ECO:0000318"/>
    <property type="project" value="GO_Central"/>
</dbReference>
<dbReference type="GO" id="GO:0003723">
    <property type="term" value="F:RNA binding"/>
    <property type="evidence" value="ECO:0000318"/>
    <property type="project" value="GO_Central"/>
</dbReference>
<dbReference type="GO" id="GO:0019843">
    <property type="term" value="F:rRNA binding"/>
    <property type="evidence" value="ECO:0007669"/>
    <property type="project" value="UniProtKB-UniRule"/>
</dbReference>
<dbReference type="GO" id="GO:0003735">
    <property type="term" value="F:structural constituent of ribosome"/>
    <property type="evidence" value="ECO:0000318"/>
    <property type="project" value="GO_Central"/>
</dbReference>
<dbReference type="GO" id="GO:0000049">
    <property type="term" value="F:tRNA binding"/>
    <property type="evidence" value="ECO:0007669"/>
    <property type="project" value="UniProtKB-UniRule"/>
</dbReference>
<dbReference type="GO" id="GO:0006412">
    <property type="term" value="P:translation"/>
    <property type="evidence" value="ECO:0000318"/>
    <property type="project" value="GO_Central"/>
</dbReference>
<dbReference type="FunFam" id="3.30.1440.10:FF:000001">
    <property type="entry name" value="50S ribosomal protein L5"/>
    <property type="match status" value="1"/>
</dbReference>
<dbReference type="Gene3D" id="3.30.1440.10">
    <property type="match status" value="1"/>
</dbReference>
<dbReference type="HAMAP" id="MF_01333_B">
    <property type="entry name" value="Ribosomal_uL5_B"/>
    <property type="match status" value="1"/>
</dbReference>
<dbReference type="InterPro" id="IPR002132">
    <property type="entry name" value="Ribosomal_uL5"/>
</dbReference>
<dbReference type="InterPro" id="IPR020930">
    <property type="entry name" value="Ribosomal_uL5_bac-type"/>
</dbReference>
<dbReference type="InterPro" id="IPR031309">
    <property type="entry name" value="Ribosomal_uL5_C"/>
</dbReference>
<dbReference type="InterPro" id="IPR020929">
    <property type="entry name" value="Ribosomal_uL5_CS"/>
</dbReference>
<dbReference type="InterPro" id="IPR022803">
    <property type="entry name" value="Ribosomal_uL5_dom_sf"/>
</dbReference>
<dbReference type="InterPro" id="IPR031310">
    <property type="entry name" value="Ribosomal_uL5_N"/>
</dbReference>
<dbReference type="NCBIfam" id="NF000585">
    <property type="entry name" value="PRK00010.1"/>
    <property type="match status" value="1"/>
</dbReference>
<dbReference type="PANTHER" id="PTHR11994">
    <property type="entry name" value="60S RIBOSOMAL PROTEIN L11-RELATED"/>
    <property type="match status" value="1"/>
</dbReference>
<dbReference type="Pfam" id="PF00281">
    <property type="entry name" value="Ribosomal_L5"/>
    <property type="match status" value="1"/>
</dbReference>
<dbReference type="Pfam" id="PF00673">
    <property type="entry name" value="Ribosomal_L5_C"/>
    <property type="match status" value="1"/>
</dbReference>
<dbReference type="PIRSF" id="PIRSF002161">
    <property type="entry name" value="Ribosomal_L5"/>
    <property type="match status" value="1"/>
</dbReference>
<dbReference type="SUPFAM" id="SSF55282">
    <property type="entry name" value="RL5-like"/>
    <property type="match status" value="1"/>
</dbReference>
<dbReference type="PROSITE" id="PS00358">
    <property type="entry name" value="RIBOSOMAL_L5"/>
    <property type="match status" value="1"/>
</dbReference>
<sequence>MANRLKEKYLNEVVPALTEQFNYSSVMAVPKVDKIVLNMGVGEAVSNAKSLEKAAEELALISGQKPLITKAKKSIAGFRLREGVAIGAKVTLRGERMYEFLDKLVSVSLPRVRDFHGVPTKSFDGRGNYTLGVKEQLIFPEINFDDVDKTRGLDIVIVTTANTDEESRALLTGLGMPFAK</sequence>
<comment type="function">
    <text evidence="1">This is one of the proteins that bind and probably mediate the attachment of the 5S RNA into the large ribosomal subunit, where it forms part of the central protuberance. In the 70S ribosome it contacts protein S13 of the 30S subunit (bridge B1b), connecting the 2 subunits; this bridge is implicated in subunit movement. Contacts the P site tRNA; the 5S rRNA and some of its associated proteins might help stabilize positioning of ribosome-bound tRNAs.</text>
</comment>
<comment type="subunit">
    <text evidence="1">Part of the 50S ribosomal subunit; part of the 5S rRNA/L5/L18/L25 subcomplex. Contacts the 5S rRNA and the P site tRNA. Forms a bridge to the 30S subunit in the 70S ribosome.</text>
</comment>
<comment type="similarity">
    <text evidence="1">Belongs to the universal ribosomal protein uL5 family.</text>
</comment>
<accession>Q8CWV4</accession>